<dbReference type="EC" id="2.3.1.-" evidence="1"/>
<dbReference type="EMBL" id="BX571863">
    <property type="protein sequence ID" value="CAE13677.1"/>
    <property type="molecule type" value="Genomic_DNA"/>
</dbReference>
<dbReference type="RefSeq" id="WP_011145692.1">
    <property type="nucleotide sequence ID" value="NC_005126.1"/>
</dbReference>
<dbReference type="SMR" id="Q7N6Z8"/>
<dbReference type="STRING" id="243265.plu1384"/>
<dbReference type="GeneID" id="88806223"/>
<dbReference type="KEGG" id="plu:plu1384"/>
<dbReference type="eggNOG" id="COG0456">
    <property type="taxonomic scope" value="Bacteria"/>
</dbReference>
<dbReference type="HOGENOM" id="CLU_013985_34_1_6"/>
<dbReference type="OrthoDB" id="1821130at2"/>
<dbReference type="Proteomes" id="UP000002514">
    <property type="component" value="Chromosome"/>
</dbReference>
<dbReference type="GO" id="GO:0016747">
    <property type="term" value="F:acyltransferase activity, transferring groups other than amino-acyl groups"/>
    <property type="evidence" value="ECO:0007669"/>
    <property type="project" value="UniProtKB-UniRule"/>
</dbReference>
<dbReference type="CDD" id="cd04301">
    <property type="entry name" value="NAT_SF"/>
    <property type="match status" value="1"/>
</dbReference>
<dbReference type="Gene3D" id="3.40.630.30">
    <property type="match status" value="1"/>
</dbReference>
<dbReference type="HAMAP" id="MF_01127">
    <property type="entry name" value="Acetyltransf_YpeA"/>
    <property type="match status" value="1"/>
</dbReference>
<dbReference type="InterPro" id="IPR023072">
    <property type="entry name" value="Acetyltransferase_YpeA"/>
</dbReference>
<dbReference type="InterPro" id="IPR016181">
    <property type="entry name" value="Acyl_CoA_acyltransferase"/>
</dbReference>
<dbReference type="InterPro" id="IPR000182">
    <property type="entry name" value="GNAT_dom"/>
</dbReference>
<dbReference type="NCBIfam" id="NF002959">
    <property type="entry name" value="PRK03624.1"/>
    <property type="match status" value="1"/>
</dbReference>
<dbReference type="PANTHER" id="PTHR43072:SF51">
    <property type="entry name" value="ABC SUPERFAMILY TRANSPORT PROTEIN"/>
    <property type="match status" value="1"/>
</dbReference>
<dbReference type="PANTHER" id="PTHR43072">
    <property type="entry name" value="N-ACETYLTRANSFERASE"/>
    <property type="match status" value="1"/>
</dbReference>
<dbReference type="Pfam" id="PF00583">
    <property type="entry name" value="Acetyltransf_1"/>
    <property type="match status" value="1"/>
</dbReference>
<dbReference type="SUPFAM" id="SSF55729">
    <property type="entry name" value="Acyl-CoA N-acyltransferases (Nat)"/>
    <property type="match status" value="1"/>
</dbReference>
<dbReference type="PROSITE" id="PS51186">
    <property type="entry name" value="GNAT"/>
    <property type="match status" value="1"/>
</dbReference>
<gene>
    <name type="ordered locus">plu1384</name>
</gene>
<sequence>MEIRVFRQDDFEEVITLWERCDLLNPGVDPEVDIERKLTHDPDLFLVAEVVGEVVGTIMGGYDGHRGSAYYLGVHPEFRGRGIANALIARLEKKLIARGCPKIVLIVPEDNDATIYMCEKLEYEDRHQESVIFSKRLIVDQEY</sequence>
<keyword id="KW-0012">Acyltransferase</keyword>
<keyword id="KW-1185">Reference proteome</keyword>
<keyword id="KW-0808">Transferase</keyword>
<name>Y1384_PHOLL</name>
<feature type="chain" id="PRO_0000298442" description="Acetyltransferase plu1384">
    <location>
        <begin position="1"/>
        <end position="143"/>
    </location>
</feature>
<feature type="domain" description="N-acetyltransferase" evidence="1">
    <location>
        <begin position="1"/>
        <end position="138"/>
    </location>
</feature>
<organism>
    <name type="scientific">Photorhabdus laumondii subsp. laumondii (strain DSM 15139 / CIP 105565 / TT01)</name>
    <name type="common">Photorhabdus luminescens subsp. laumondii</name>
    <dbReference type="NCBI Taxonomy" id="243265"/>
    <lineage>
        <taxon>Bacteria</taxon>
        <taxon>Pseudomonadati</taxon>
        <taxon>Pseudomonadota</taxon>
        <taxon>Gammaproteobacteria</taxon>
        <taxon>Enterobacterales</taxon>
        <taxon>Morganellaceae</taxon>
        <taxon>Photorhabdus</taxon>
    </lineage>
</organism>
<comment type="similarity">
    <text evidence="1">Belongs to the acetyltransferase family. YpeA subfamily.</text>
</comment>
<protein>
    <recommendedName>
        <fullName evidence="1">Acetyltransferase plu1384</fullName>
        <ecNumber evidence="1">2.3.1.-</ecNumber>
    </recommendedName>
</protein>
<evidence type="ECO:0000255" key="1">
    <source>
        <dbReference type="HAMAP-Rule" id="MF_01127"/>
    </source>
</evidence>
<reference key="1">
    <citation type="journal article" date="2003" name="Nat. Biotechnol.">
        <title>The genome sequence of the entomopathogenic bacterium Photorhabdus luminescens.</title>
        <authorList>
            <person name="Duchaud E."/>
            <person name="Rusniok C."/>
            <person name="Frangeul L."/>
            <person name="Buchrieser C."/>
            <person name="Givaudan A."/>
            <person name="Taourit S."/>
            <person name="Bocs S."/>
            <person name="Boursaux-Eude C."/>
            <person name="Chandler M."/>
            <person name="Charles J.-F."/>
            <person name="Dassa E."/>
            <person name="Derose R."/>
            <person name="Derzelle S."/>
            <person name="Freyssinet G."/>
            <person name="Gaudriault S."/>
            <person name="Medigue C."/>
            <person name="Lanois A."/>
            <person name="Powell K."/>
            <person name="Siguier P."/>
            <person name="Vincent R."/>
            <person name="Wingate V."/>
            <person name="Zouine M."/>
            <person name="Glaser P."/>
            <person name="Boemare N."/>
            <person name="Danchin A."/>
            <person name="Kunst F."/>
        </authorList>
    </citation>
    <scope>NUCLEOTIDE SEQUENCE [LARGE SCALE GENOMIC DNA]</scope>
    <source>
        <strain>DSM 15139 / CIP 105565 / TT01</strain>
    </source>
</reference>
<proteinExistence type="inferred from homology"/>
<accession>Q7N6Z8</accession>